<gene>
    <name type="primary">SSB</name>
</gene>
<organism>
    <name type="scientific">Bos taurus</name>
    <name type="common">Bovine</name>
    <dbReference type="NCBI Taxonomy" id="9913"/>
    <lineage>
        <taxon>Eukaryota</taxon>
        <taxon>Metazoa</taxon>
        <taxon>Chordata</taxon>
        <taxon>Craniata</taxon>
        <taxon>Vertebrata</taxon>
        <taxon>Euteleostomi</taxon>
        <taxon>Mammalia</taxon>
        <taxon>Eutheria</taxon>
        <taxon>Laurasiatheria</taxon>
        <taxon>Artiodactyla</taxon>
        <taxon>Ruminantia</taxon>
        <taxon>Pecora</taxon>
        <taxon>Bovidae</taxon>
        <taxon>Bovinae</taxon>
        <taxon>Bos</taxon>
    </lineage>
</organism>
<accession>P10881</accession>
<accession>Q3ZBL2</accession>
<feature type="chain" id="PRO_0000207598" description="Lupus La protein homolog">
    <location>
        <begin position="1"/>
        <end position="404"/>
    </location>
</feature>
<feature type="domain" description="HTH La-type RNA-binding" evidence="5">
    <location>
        <begin position="7"/>
        <end position="99"/>
    </location>
</feature>
<feature type="domain" description="RRM" evidence="4">
    <location>
        <begin position="111"/>
        <end position="187"/>
    </location>
</feature>
<feature type="domain" description="xRRM" evidence="6">
    <location>
        <begin position="227"/>
        <end position="348"/>
    </location>
</feature>
<feature type="region of interest" description="Disordered" evidence="7">
    <location>
        <begin position="329"/>
        <end position="404"/>
    </location>
</feature>
<feature type="compositionally biased region" description="Basic residues" evidence="7">
    <location>
        <begin position="329"/>
        <end position="342"/>
    </location>
</feature>
<feature type="compositionally biased region" description="Low complexity" evidence="7">
    <location>
        <begin position="343"/>
        <end position="354"/>
    </location>
</feature>
<feature type="compositionally biased region" description="Basic and acidic residues" evidence="7">
    <location>
        <begin position="381"/>
        <end position="391"/>
    </location>
</feature>
<feature type="modified residue" description="Phosphoserine" evidence="2">
    <location>
        <position position="92"/>
    </location>
</feature>
<feature type="modified residue" description="Phosphoserine" evidence="2">
    <location>
        <position position="94"/>
    </location>
</feature>
<feature type="modified residue" description="N6-acetyllysine" evidence="2">
    <location>
        <position position="116"/>
    </location>
</feature>
<feature type="modified residue" description="Phosphothreonine" evidence="2">
    <location>
        <position position="120"/>
    </location>
</feature>
<feature type="modified residue" description="N6-acetyllysine" evidence="2">
    <location>
        <position position="128"/>
    </location>
</feature>
<feature type="modified residue" description="Phosphoserine" evidence="2">
    <location>
        <position position="225"/>
    </location>
</feature>
<feature type="modified residue" description="N6-acetyllysine" evidence="2">
    <location>
        <position position="328"/>
    </location>
</feature>
<feature type="modified residue" description="N6-acetyllysine" evidence="3">
    <location>
        <position position="341"/>
    </location>
</feature>
<feature type="modified residue" description="N6-acetyllysine" evidence="2">
    <location>
        <position position="360"/>
    </location>
</feature>
<feature type="modified residue" description="Phosphothreonine" evidence="2">
    <location>
        <position position="362"/>
    </location>
</feature>
<feature type="modified residue" description="Phosphoserine" evidence="2">
    <location>
        <position position="366"/>
    </location>
</feature>
<feature type="sequence conflict" description="In Ref. 1; CAA31986." evidence="8" ref="1">
    <original>K</original>
    <variation>E</variation>
    <location>
        <position position="76"/>
    </location>
</feature>
<keyword id="KW-0007">Acetylation</keyword>
<keyword id="KW-0539">Nucleus</keyword>
<keyword id="KW-0597">Phosphoprotein</keyword>
<keyword id="KW-1185">Reference proteome</keyword>
<keyword id="KW-0694">RNA-binding</keyword>
<evidence type="ECO:0000250" key="1"/>
<evidence type="ECO:0000250" key="2">
    <source>
        <dbReference type="UniProtKB" id="P05455"/>
    </source>
</evidence>
<evidence type="ECO:0000250" key="3">
    <source>
        <dbReference type="UniProtKB" id="P32067"/>
    </source>
</evidence>
<evidence type="ECO:0000255" key="4">
    <source>
        <dbReference type="PROSITE-ProRule" id="PRU00176"/>
    </source>
</evidence>
<evidence type="ECO:0000255" key="5">
    <source>
        <dbReference type="PROSITE-ProRule" id="PRU00332"/>
    </source>
</evidence>
<evidence type="ECO:0000255" key="6">
    <source>
        <dbReference type="PROSITE-ProRule" id="PRU01288"/>
    </source>
</evidence>
<evidence type="ECO:0000256" key="7">
    <source>
        <dbReference type="SAM" id="MobiDB-lite"/>
    </source>
</evidence>
<evidence type="ECO:0000305" key="8"/>
<dbReference type="EMBL" id="X13698">
    <property type="protein sequence ID" value="CAA31986.1"/>
    <property type="molecule type" value="mRNA"/>
</dbReference>
<dbReference type="EMBL" id="BC103234">
    <property type="protein sequence ID" value="AAI03235.1"/>
    <property type="molecule type" value="mRNA"/>
</dbReference>
<dbReference type="PIR" id="S03849">
    <property type="entry name" value="S03849"/>
</dbReference>
<dbReference type="RefSeq" id="NP_788838.1">
    <property type="nucleotide sequence ID" value="NM_176665.2"/>
</dbReference>
<dbReference type="BMRB" id="P10881"/>
<dbReference type="SMR" id="P10881"/>
<dbReference type="FunCoup" id="P10881">
    <property type="interactions" value="4070"/>
</dbReference>
<dbReference type="STRING" id="9913.ENSBTAP00000011484"/>
<dbReference type="PaxDb" id="9913-ENSBTAP00000011484"/>
<dbReference type="PeptideAtlas" id="P10881"/>
<dbReference type="Ensembl" id="ENSBTAT00000011484.6">
    <property type="protein sequence ID" value="ENSBTAP00000011484.4"/>
    <property type="gene ID" value="ENSBTAG00000008716.7"/>
</dbReference>
<dbReference type="GeneID" id="338071"/>
<dbReference type="KEGG" id="bta:338071"/>
<dbReference type="CTD" id="6741"/>
<dbReference type="VEuPathDB" id="HostDB:ENSBTAG00000008716"/>
<dbReference type="VGNC" id="VGNC:58554">
    <property type="gene designation" value="SSB"/>
</dbReference>
<dbReference type="eggNOG" id="KOG4213">
    <property type="taxonomic scope" value="Eukaryota"/>
</dbReference>
<dbReference type="GeneTree" id="ENSGT00830000128380"/>
<dbReference type="HOGENOM" id="CLU_042341_0_0_1"/>
<dbReference type="InParanoid" id="P10881"/>
<dbReference type="OMA" id="QFERSIY"/>
<dbReference type="OrthoDB" id="439993at2759"/>
<dbReference type="TreeFam" id="TF314476"/>
<dbReference type="Proteomes" id="UP000009136">
    <property type="component" value="Chromosome 2"/>
</dbReference>
<dbReference type="Bgee" id="ENSBTAG00000008716">
    <property type="expression patterns" value="Expressed in spermatocyte and 104 other cell types or tissues"/>
</dbReference>
<dbReference type="GO" id="GO:0010494">
    <property type="term" value="C:cytoplasmic stress granule"/>
    <property type="evidence" value="ECO:0000318"/>
    <property type="project" value="GO_Central"/>
</dbReference>
<dbReference type="GO" id="GO:0005829">
    <property type="term" value="C:cytosol"/>
    <property type="evidence" value="ECO:0000318"/>
    <property type="project" value="GO_Central"/>
</dbReference>
<dbReference type="GO" id="GO:0005634">
    <property type="term" value="C:nucleus"/>
    <property type="evidence" value="ECO:0000318"/>
    <property type="project" value="GO_Central"/>
</dbReference>
<dbReference type="GO" id="GO:1990904">
    <property type="term" value="C:ribonucleoprotein complex"/>
    <property type="evidence" value="ECO:0007669"/>
    <property type="project" value="InterPro"/>
</dbReference>
<dbReference type="GO" id="GO:0003729">
    <property type="term" value="F:mRNA binding"/>
    <property type="evidence" value="ECO:0000318"/>
    <property type="project" value="GO_Central"/>
</dbReference>
<dbReference type="GO" id="GO:0045727">
    <property type="term" value="P:positive regulation of translation"/>
    <property type="evidence" value="ECO:0000318"/>
    <property type="project" value="GO_Central"/>
</dbReference>
<dbReference type="GO" id="GO:0008033">
    <property type="term" value="P:tRNA processing"/>
    <property type="evidence" value="ECO:0000318"/>
    <property type="project" value="GO_Central"/>
</dbReference>
<dbReference type="CDD" id="cd08028">
    <property type="entry name" value="LARP_3"/>
    <property type="match status" value="1"/>
</dbReference>
<dbReference type="CDD" id="cd12291">
    <property type="entry name" value="RRM1_La"/>
    <property type="match status" value="1"/>
</dbReference>
<dbReference type="CDD" id="cd12541">
    <property type="entry name" value="RRM2_La"/>
    <property type="match status" value="1"/>
</dbReference>
<dbReference type="FunFam" id="3.30.70.330:FF:000366">
    <property type="entry name" value="Lupus La protein homolog"/>
    <property type="match status" value="1"/>
</dbReference>
<dbReference type="FunFam" id="3.30.70.330:FF:000402">
    <property type="entry name" value="Lupus La protein homolog"/>
    <property type="match status" value="1"/>
</dbReference>
<dbReference type="FunFam" id="1.10.10.10:FF:000336">
    <property type="entry name" value="lupus La protein homolog"/>
    <property type="match status" value="1"/>
</dbReference>
<dbReference type="Gene3D" id="3.30.70.330">
    <property type="match status" value="2"/>
</dbReference>
<dbReference type="Gene3D" id="1.10.10.10">
    <property type="entry name" value="Winged helix-like DNA-binding domain superfamily/Winged helix DNA-binding domain"/>
    <property type="match status" value="1"/>
</dbReference>
<dbReference type="InterPro" id="IPR045180">
    <property type="entry name" value="La_dom_prot"/>
</dbReference>
<dbReference type="InterPro" id="IPR006630">
    <property type="entry name" value="La_HTH"/>
</dbReference>
<dbReference type="InterPro" id="IPR014886">
    <property type="entry name" value="La_xRRM"/>
</dbReference>
<dbReference type="InterPro" id="IPR002344">
    <property type="entry name" value="Lupus_La"/>
</dbReference>
<dbReference type="InterPro" id="IPR012677">
    <property type="entry name" value="Nucleotide-bd_a/b_plait_sf"/>
</dbReference>
<dbReference type="InterPro" id="IPR035979">
    <property type="entry name" value="RBD_domain_sf"/>
</dbReference>
<dbReference type="InterPro" id="IPR000504">
    <property type="entry name" value="RRM_dom"/>
</dbReference>
<dbReference type="InterPro" id="IPR036388">
    <property type="entry name" value="WH-like_DNA-bd_sf"/>
</dbReference>
<dbReference type="InterPro" id="IPR036390">
    <property type="entry name" value="WH_DNA-bd_sf"/>
</dbReference>
<dbReference type="PANTHER" id="PTHR22792:SF166">
    <property type="entry name" value="LUPUS LA PROTEIN HOMOLOG"/>
    <property type="match status" value="1"/>
</dbReference>
<dbReference type="PANTHER" id="PTHR22792">
    <property type="entry name" value="LUPUS LA PROTEIN-RELATED"/>
    <property type="match status" value="1"/>
</dbReference>
<dbReference type="Pfam" id="PF05383">
    <property type="entry name" value="La"/>
    <property type="match status" value="1"/>
</dbReference>
<dbReference type="Pfam" id="PF00076">
    <property type="entry name" value="RRM_1"/>
    <property type="match status" value="1"/>
</dbReference>
<dbReference type="Pfam" id="PF08777">
    <property type="entry name" value="RRM_3"/>
    <property type="match status" value="1"/>
</dbReference>
<dbReference type="PRINTS" id="PR00302">
    <property type="entry name" value="LUPUSLA"/>
</dbReference>
<dbReference type="SMART" id="SM00715">
    <property type="entry name" value="LA"/>
    <property type="match status" value="1"/>
</dbReference>
<dbReference type="SMART" id="SM00360">
    <property type="entry name" value="RRM"/>
    <property type="match status" value="1"/>
</dbReference>
<dbReference type="SUPFAM" id="SSF54928">
    <property type="entry name" value="RNA-binding domain, RBD"/>
    <property type="match status" value="2"/>
</dbReference>
<dbReference type="SUPFAM" id="SSF46785">
    <property type="entry name" value="Winged helix' DNA-binding domain"/>
    <property type="match status" value="1"/>
</dbReference>
<dbReference type="PROSITE" id="PS50961">
    <property type="entry name" value="HTH_LA"/>
    <property type="match status" value="1"/>
</dbReference>
<dbReference type="PROSITE" id="PS50102">
    <property type="entry name" value="RRM"/>
    <property type="match status" value="1"/>
</dbReference>
<dbReference type="PROSITE" id="PS51939">
    <property type="entry name" value="XRRM"/>
    <property type="match status" value="1"/>
</dbReference>
<protein>
    <recommendedName>
        <fullName>Lupus La protein homolog</fullName>
    </recommendedName>
    <alternativeName>
        <fullName>La autoantigen homolog</fullName>
    </alternativeName>
    <alternativeName>
        <fullName>La ribonucleoprotein</fullName>
    </alternativeName>
</protein>
<comment type="function">
    <text>Binds to the 3' poly(U) terminus of nascent RNA polymerase III transcripts, protecting them from exonuclease digestion and facilitating their folding and maturation.</text>
</comment>
<comment type="subunit">
    <text evidence="1">Interacts with DDX15. May interact with RUFY1 (By similarity).</text>
</comment>
<comment type="subcellular location">
    <subcellularLocation>
        <location evidence="8">Nucleus</location>
    </subcellularLocation>
</comment>
<comment type="PTM">
    <text>Phosphorylated in the C-terminal part of the protein.</text>
</comment>
<sequence length="404" mass="46534">MAENGDNEKMAALEAKICHQIEYYFGDFNLPRDKFLKEQIKLDEGWVPLEIMIKFNRLNRLTTDFNVIVEALSKSKAELMEISEDKTKIRRSPSKPLPEVTDEYKNDVKNRSVYIKGFPTDAALDDIKEWLEDKGQVLNIQMRRTLHKAFKGSIFAVFDSIESAKKFVETPGQKYKDTDLLILFKEDYFTKKNEERKQNKMEAKLRAKQEQEEKQKLAENAEMKSLEEKIGCLLKFSGDLDDQTCREDLHTLFSNHGEIKWIHFVRGAKEGIILFKEKAKEALDKAKEANNGNLQLRNKEVTWEVLEGDVEKEALKKIIEDQQESLNKWKSKGRRFKGKGKGNKAAQAGSAKGKVQFQGKKTKFDSDDERDENGASRAVKRAREETDKEPPSKQQKTENGAGDQ</sequence>
<proteinExistence type="evidence at transcript level"/>
<reference key="1">
    <citation type="journal article" date="1989" name="Nucleic Acids Res.">
        <title>Ribonucleoprotein SS-B/La belongs to a protein family with consensus sequences for RNA-binding.</title>
        <authorList>
            <person name="Chan E.K.L."/>
            <person name="Sullivan K.F."/>
            <person name="Tan E.M."/>
        </authorList>
    </citation>
    <scope>NUCLEOTIDE SEQUENCE [MRNA]</scope>
    <source>
        <tissue>Pituitary</tissue>
    </source>
</reference>
<reference key="2">
    <citation type="submission" date="2005-08" db="EMBL/GenBank/DDBJ databases">
        <authorList>
            <consortium name="NIH - Mammalian Gene Collection (MGC) project"/>
        </authorList>
    </citation>
    <scope>NUCLEOTIDE SEQUENCE [LARGE SCALE MRNA]</scope>
    <source>
        <strain>Hereford</strain>
        <tissue>Thymus</tissue>
    </source>
</reference>
<name>LA_BOVIN</name>